<comment type="function">
    <text evidence="1">May play a role in DNA repair. It seems to be involved in an RecBC-independent recombinational process of DNA repair. It may act with RecF and RecO.</text>
</comment>
<comment type="similarity">
    <text evidence="1">Belongs to the RecR family.</text>
</comment>
<sequence length="201" mass="22653">MNETNDNDIDQLIYLFSKLPGLGIRSARRIALYLLQDKDIRLKSLINNLVEIDKKIVKCEICGNMDTENMCRICSSEYRDKSIIAIVETVAELWAMERSGNFKGLYHVLGHNLSATSRQNPSILRLPELLTRCFAENIKEVIIATNSTLEGQTTAYFITEYLKEHPAKISRLASGIPIGGELDYLDEGTVSAAINLRQPFE</sequence>
<gene>
    <name evidence="1" type="primary">recR</name>
    <name type="ordered locus">RC0609</name>
</gene>
<reference key="1">
    <citation type="journal article" date="2001" name="Science">
        <title>Mechanisms of evolution in Rickettsia conorii and R. prowazekii.</title>
        <authorList>
            <person name="Ogata H."/>
            <person name="Audic S."/>
            <person name="Renesto-Audiffren P."/>
            <person name="Fournier P.-E."/>
            <person name="Barbe V."/>
            <person name="Samson D."/>
            <person name="Roux V."/>
            <person name="Cossart P."/>
            <person name="Weissenbach J."/>
            <person name="Claverie J.-M."/>
            <person name="Raoult D."/>
        </authorList>
    </citation>
    <scope>NUCLEOTIDE SEQUENCE [LARGE SCALE GENOMIC DNA]</scope>
    <source>
        <strain>ATCC VR-613 / Malish 7</strain>
    </source>
</reference>
<organism>
    <name type="scientific">Rickettsia conorii (strain ATCC VR-613 / Malish 7)</name>
    <dbReference type="NCBI Taxonomy" id="272944"/>
    <lineage>
        <taxon>Bacteria</taxon>
        <taxon>Pseudomonadati</taxon>
        <taxon>Pseudomonadota</taxon>
        <taxon>Alphaproteobacteria</taxon>
        <taxon>Rickettsiales</taxon>
        <taxon>Rickettsiaceae</taxon>
        <taxon>Rickettsieae</taxon>
        <taxon>Rickettsia</taxon>
        <taxon>spotted fever group</taxon>
    </lineage>
</organism>
<dbReference type="EMBL" id="AE006914">
    <property type="protein sequence ID" value="AAL03147.1"/>
    <property type="molecule type" value="Genomic_DNA"/>
</dbReference>
<dbReference type="PIR" id="A97776">
    <property type="entry name" value="A97776"/>
</dbReference>
<dbReference type="RefSeq" id="WP_010977239.1">
    <property type="nucleotide sequence ID" value="NC_003103.1"/>
</dbReference>
<dbReference type="SMR" id="Q92I11"/>
<dbReference type="GeneID" id="928796"/>
<dbReference type="KEGG" id="rco:RC0609"/>
<dbReference type="PATRIC" id="fig|272944.4.peg.695"/>
<dbReference type="HOGENOM" id="CLU_060739_1_1_5"/>
<dbReference type="Proteomes" id="UP000000816">
    <property type="component" value="Chromosome"/>
</dbReference>
<dbReference type="GO" id="GO:0003677">
    <property type="term" value="F:DNA binding"/>
    <property type="evidence" value="ECO:0007669"/>
    <property type="project" value="UniProtKB-UniRule"/>
</dbReference>
<dbReference type="GO" id="GO:0008270">
    <property type="term" value="F:zinc ion binding"/>
    <property type="evidence" value="ECO:0007669"/>
    <property type="project" value="UniProtKB-KW"/>
</dbReference>
<dbReference type="GO" id="GO:0006310">
    <property type="term" value="P:DNA recombination"/>
    <property type="evidence" value="ECO:0007669"/>
    <property type="project" value="UniProtKB-UniRule"/>
</dbReference>
<dbReference type="GO" id="GO:0006281">
    <property type="term" value="P:DNA repair"/>
    <property type="evidence" value="ECO:0007669"/>
    <property type="project" value="UniProtKB-UniRule"/>
</dbReference>
<dbReference type="CDD" id="cd01025">
    <property type="entry name" value="TOPRIM_recR"/>
    <property type="match status" value="1"/>
</dbReference>
<dbReference type="Gene3D" id="3.40.1360.10">
    <property type="match status" value="1"/>
</dbReference>
<dbReference type="Gene3D" id="1.10.8.420">
    <property type="entry name" value="RecR Domain 1"/>
    <property type="match status" value="1"/>
</dbReference>
<dbReference type="HAMAP" id="MF_00017">
    <property type="entry name" value="RecR"/>
    <property type="match status" value="1"/>
</dbReference>
<dbReference type="InterPro" id="IPR000093">
    <property type="entry name" value="DNA_Rcmb_RecR"/>
</dbReference>
<dbReference type="InterPro" id="IPR023627">
    <property type="entry name" value="Rcmb_RecR"/>
</dbReference>
<dbReference type="InterPro" id="IPR015967">
    <property type="entry name" value="Rcmb_RecR_Znf"/>
</dbReference>
<dbReference type="InterPro" id="IPR006171">
    <property type="entry name" value="TOPRIM_dom"/>
</dbReference>
<dbReference type="InterPro" id="IPR034137">
    <property type="entry name" value="TOPRIM_RecR"/>
</dbReference>
<dbReference type="NCBIfam" id="TIGR00615">
    <property type="entry name" value="recR"/>
    <property type="match status" value="1"/>
</dbReference>
<dbReference type="PANTHER" id="PTHR30446">
    <property type="entry name" value="RECOMBINATION PROTEIN RECR"/>
    <property type="match status" value="1"/>
</dbReference>
<dbReference type="PANTHER" id="PTHR30446:SF0">
    <property type="entry name" value="RECOMBINATION PROTEIN RECR"/>
    <property type="match status" value="1"/>
</dbReference>
<dbReference type="Pfam" id="PF21175">
    <property type="entry name" value="RecR_C"/>
    <property type="match status" value="1"/>
</dbReference>
<dbReference type="Pfam" id="PF21176">
    <property type="entry name" value="RecR_HhH"/>
    <property type="match status" value="1"/>
</dbReference>
<dbReference type="Pfam" id="PF02132">
    <property type="entry name" value="RecR_ZnF"/>
    <property type="match status" value="1"/>
</dbReference>
<dbReference type="Pfam" id="PF13662">
    <property type="entry name" value="Toprim_4"/>
    <property type="match status" value="1"/>
</dbReference>
<dbReference type="SMART" id="SM00493">
    <property type="entry name" value="TOPRIM"/>
    <property type="match status" value="1"/>
</dbReference>
<dbReference type="SUPFAM" id="SSF111304">
    <property type="entry name" value="Recombination protein RecR"/>
    <property type="match status" value="1"/>
</dbReference>
<dbReference type="PROSITE" id="PS01300">
    <property type="entry name" value="RECR"/>
    <property type="match status" value="1"/>
</dbReference>
<dbReference type="PROSITE" id="PS50880">
    <property type="entry name" value="TOPRIM"/>
    <property type="match status" value="1"/>
</dbReference>
<keyword id="KW-0227">DNA damage</keyword>
<keyword id="KW-0233">DNA recombination</keyword>
<keyword id="KW-0234">DNA repair</keyword>
<keyword id="KW-0479">Metal-binding</keyword>
<keyword id="KW-0862">Zinc</keyword>
<keyword id="KW-0863">Zinc-finger</keyword>
<feature type="chain" id="PRO_0000190374" description="Recombination protein RecR">
    <location>
        <begin position="1"/>
        <end position="201"/>
    </location>
</feature>
<feature type="domain" description="Toprim" evidence="1">
    <location>
        <begin position="82"/>
        <end position="177"/>
    </location>
</feature>
<feature type="zinc finger region" description="C4-type" evidence="1">
    <location>
        <begin position="59"/>
        <end position="74"/>
    </location>
</feature>
<evidence type="ECO:0000255" key="1">
    <source>
        <dbReference type="HAMAP-Rule" id="MF_00017"/>
    </source>
</evidence>
<proteinExistence type="inferred from homology"/>
<accession>Q92I11</accession>
<name>RECR_RICCN</name>
<protein>
    <recommendedName>
        <fullName evidence="1">Recombination protein RecR</fullName>
    </recommendedName>
</protein>